<name>RHG33_MOUSE</name>
<sequence length="1305" mass="139801">MLQAQKQSDPILPWGASWAGRGQTLRARSTDSLDGPGEGSVQPVPTTGGPGTKGKPGKRLSAPRGPFPRLADCAHFHYENVDFGHIQLLLSPEREGPSLSGENELVFGVQVTCQGRSWPVLRSYDDFRSLDAHLHRCIFDRRFSCLPELPPPPEGTRAAQMLVPLLLQYLETLSGLVDSNLNCGPVLTWMELDNHGRRLLLSEEASLNIPAVAAAHVVKRYTAQAPDELSFEVGDIVSVIDMPPTEDRSWWRGKRGFQVGFFPSECVELFTERPGPGLKADADSPLCGIPAPQGISSLTSAVPRPRGKLAGLLRTFMRSRPSRQRLRQRGILRQRVFGCDLGEHLSNSGQDVPQVLRCCSEFIEAHGVVDGIYRLSGVSSNIQRLRHEFDSERIPELSGPAFLQDIHSVSSLCKLYFRELPNPLLTYQLYGKFSEAMSVPGEEERLVRVHDVIQQLPPPHYRTLEYLLRHLARMARHSANTSMHARNLAIVWAPNLLRSMELESVGLGGAAAFREVRVQSVVVEFLLTHVEVLFSDTFTSAGLDPAGRCLLPRPKSLAGSSPSTRLLTLEEAQARTQGRLGTPTEPTTPKTPASPVERRKRERAEKQRKPGGSSWKTFFALGRGPSIPRKKPLPWLGGSRAPPQPSGSRPDTVTLRSAKSEESLSSQASGAGLQRLHRLRRPHSSSDAFPVGPAPAGSCESLSSSSSSSSSSSSSSSSESSAGGLGPLSGSPSHRTSAWLDDGDDLDFSPPRCLEGLRGLDFDPLTFRCSSPTPGDPAPPASPAPPASASAFPPRATPQALSPHGPTKPASPTALDISEPLAVSVPPAVLELLGAGGTPASATPTPALSPHLIPLLLRGAEAQLSDTCQQEISSKLAPTRGAPGQQSPGGMDSPLLPPPLPLLRPGGAPPPPPKNPARLMALALAERAQQVAEQQSQQEQGGTPPAPHSPFRRSLSLEVGGEPVGTSGSGIHPPSLAHPGAWAPGPPPYLPRQQSDGSLVRSQRPLGTSRRSPRGPSQVSAHLRASGAYRDAPEMAAQSPCSVPSQGSNPSFFSTPRECLPPFLGVPKQGLYSLGPPSFPPSSPAPVWRNSLGAPSALDRGENLYYEIGVGEGTSYSGPSRSWSPFRSMPPDRHNASYGMLGQSPPLHRSPDFLLSYPPPPSCFPPEHLTHSVSQRLARRPTRPEPLYVNLALGPRGPSPASSSSSSPPAHPRSRSDPGPPVPRLPQKQRAPWGPHTPHRVPGPWGSPEPFLLYRPAPPSYGRGGEVRGSLYRNGGHRGEGAGPPPPYPTPSWSLHSEGQTRSYC</sequence>
<comment type="function">
    <text evidence="1">May be involved in several stages of intracellular trafficking (By similarity). Could play an important role in the regulation of glucose transport by insulin. May act as a downstream effector of RHOQ/TC10 in the regulation of insulin-stimulated glucose transport.</text>
</comment>
<comment type="subunit">
    <text evidence="1">Specifically interacts with CDC42 and RHOQ/TC10 through its Rho-GAP domain. Interacts with NEK6 (By similarity).</text>
</comment>
<comment type="subcellular location">
    <subcellularLocation>
        <location evidence="5">Cell membrane</location>
    </subcellularLocation>
    <text>Translocates to the plasma membrane in response to insulin in adipocytes.</text>
</comment>
<comment type="tissue specificity">
    <text evidence="5">Highly expressed in brain and testis. Also expressed in white adipose tissue (WAT) and muscle at a low level.</text>
</comment>
<comment type="induction">
    <text evidence="5">Dramatically induced during adipocyte differentiation.</text>
</comment>
<comment type="domain">
    <text>The N-terminal PX domain interacts specifically with phosphatidylinositol 4,5-bisphosphate.</text>
</comment>
<comment type="similarity">
    <text evidence="6">Belongs to the PX domain-containing GAP family.</text>
</comment>
<comment type="sequence caution" evidence="6">
    <conflict type="erroneous initiation">
        <sequence resource="EMBL-CDS" id="AAH61471"/>
    </conflict>
</comment>
<evidence type="ECO:0000250" key="1"/>
<evidence type="ECO:0000255" key="2">
    <source>
        <dbReference type="PROSITE-ProRule" id="PRU00172"/>
    </source>
</evidence>
<evidence type="ECO:0000255" key="3">
    <source>
        <dbReference type="PROSITE-ProRule" id="PRU00192"/>
    </source>
</evidence>
<evidence type="ECO:0000256" key="4">
    <source>
        <dbReference type="SAM" id="MobiDB-lite"/>
    </source>
</evidence>
<evidence type="ECO:0000269" key="5">
    <source>
    </source>
</evidence>
<evidence type="ECO:0000305" key="6"/>
<evidence type="ECO:0007744" key="7">
    <source>
    </source>
</evidence>
<evidence type="ECO:0007744" key="8">
    <source>
    </source>
</evidence>
<evidence type="ECO:0007744" key="9">
    <source>
    </source>
</evidence>
<evidence type="ECO:0007744" key="10">
    <source>
    </source>
</evidence>
<accession>Q80YF9</accession>
<accession>Q6P7W6</accession>
<feature type="chain" id="PRO_0000056722" description="Rho GTPase-activating protein 33">
    <location>
        <begin position="1"/>
        <end position="1305"/>
    </location>
</feature>
<feature type="domain" description="PX; atypical">
    <location>
        <begin position="83"/>
        <end position="192"/>
    </location>
</feature>
<feature type="domain" description="SH3" evidence="3">
    <location>
        <begin position="210"/>
        <end position="272"/>
    </location>
</feature>
<feature type="domain" description="Rho-GAP" evidence="2">
    <location>
        <begin position="339"/>
        <end position="534"/>
    </location>
</feature>
<feature type="region of interest" description="Disordered" evidence="4">
    <location>
        <begin position="1"/>
        <end position="64"/>
    </location>
</feature>
<feature type="region of interest" description="Disordered" evidence="4">
    <location>
        <begin position="575"/>
        <end position="818"/>
    </location>
</feature>
<feature type="region of interest" description="Disordered" evidence="4">
    <location>
        <begin position="864"/>
        <end position="1054"/>
    </location>
</feature>
<feature type="region of interest" description="Disordered" evidence="4">
    <location>
        <begin position="1115"/>
        <end position="1305"/>
    </location>
</feature>
<feature type="compositionally biased region" description="Low complexity" evidence="4">
    <location>
        <begin position="582"/>
        <end position="595"/>
    </location>
</feature>
<feature type="compositionally biased region" description="Basic and acidic residues" evidence="4">
    <location>
        <begin position="596"/>
        <end position="608"/>
    </location>
</feature>
<feature type="compositionally biased region" description="Polar residues" evidence="4">
    <location>
        <begin position="646"/>
        <end position="669"/>
    </location>
</feature>
<feature type="compositionally biased region" description="Low complexity" evidence="4">
    <location>
        <begin position="694"/>
        <end position="733"/>
    </location>
</feature>
<feature type="compositionally biased region" description="Pro residues" evidence="4">
    <location>
        <begin position="774"/>
        <end position="786"/>
    </location>
</feature>
<feature type="compositionally biased region" description="Low complexity" evidence="4">
    <location>
        <begin position="787"/>
        <end position="798"/>
    </location>
</feature>
<feature type="compositionally biased region" description="Polar residues" evidence="4">
    <location>
        <begin position="864"/>
        <end position="873"/>
    </location>
</feature>
<feature type="compositionally biased region" description="Pro residues" evidence="4">
    <location>
        <begin position="895"/>
        <end position="915"/>
    </location>
</feature>
<feature type="compositionally biased region" description="Low complexity" evidence="4">
    <location>
        <begin position="916"/>
        <end position="940"/>
    </location>
</feature>
<feature type="compositionally biased region" description="Polar residues" evidence="4">
    <location>
        <begin position="992"/>
        <end position="1020"/>
    </location>
</feature>
<feature type="compositionally biased region" description="Polar residues" evidence="4">
    <location>
        <begin position="1039"/>
        <end position="1054"/>
    </location>
</feature>
<feature type="compositionally biased region" description="Polar residues" evidence="4">
    <location>
        <begin position="1115"/>
        <end position="1125"/>
    </location>
</feature>
<feature type="compositionally biased region" description="Low complexity" evidence="4">
    <location>
        <begin position="1194"/>
        <end position="1208"/>
    </location>
</feature>
<feature type="compositionally biased region" description="Polar residues" evidence="4">
    <location>
        <begin position="1292"/>
        <end position="1305"/>
    </location>
</feature>
<feature type="site" description="Arginine finger; crucial for GTP hydrolysis by stabilizing the transition state" evidence="2">
    <location>
        <position position="374"/>
    </location>
</feature>
<feature type="modified residue" description="Phosphoserine" evidence="9">
    <location>
        <position position="32"/>
    </location>
</feature>
<feature type="modified residue" description="Phosphoserine" evidence="7">
    <location>
        <position position="594"/>
    </location>
</feature>
<feature type="modified residue" description="Phosphoserine" evidence="9">
    <location>
        <position position="660"/>
    </location>
</feature>
<feature type="modified residue" description="Phosphoserine" evidence="9">
    <location>
        <position position="749"/>
    </location>
</feature>
<feature type="modified residue" description="Phosphotyrosine" evidence="8">
    <location>
        <position position="1188"/>
    </location>
</feature>
<feature type="modified residue" description="Omega-N-methylarginine" evidence="10">
    <location>
        <position position="1263"/>
    </location>
</feature>
<feature type="sequence conflict" description="In Ref. 2; AAH61471." evidence="6" ref="2">
    <original>R</original>
    <variation>C</variation>
    <location>
        <position position="357"/>
    </location>
</feature>
<reference key="1">
    <citation type="journal article" date="2003" name="EMBO J.">
        <title>TCGAP, a multidomain Rho GTPase-activating protein involved in insulin-stimulated glucose transport.</title>
        <authorList>
            <person name="Chiang S.-H."/>
            <person name="Hwang J."/>
            <person name="Legendre M."/>
            <person name="Zhang M."/>
            <person name="Kimura A."/>
            <person name="Saltiel A.R."/>
        </authorList>
    </citation>
    <scope>NUCLEOTIDE SEQUENCE [MRNA]</scope>
    <scope>TISSUE SPECIFICITY</scope>
    <scope>SUBCELLULAR LOCATION</scope>
    <scope>INDUCTION</scope>
    <scope>INTERACTION WITH CDC42 AND RHOQ</scope>
    <scope>POSSIBLE FUNCTION</scope>
    <source>
        <tissue>Adipocyte</tissue>
    </source>
</reference>
<reference key="2">
    <citation type="journal article" date="2004" name="Genome Res.">
        <title>The status, quality, and expansion of the NIH full-length cDNA project: the Mammalian Gene Collection (MGC).</title>
        <authorList>
            <consortium name="The MGC Project Team"/>
        </authorList>
    </citation>
    <scope>NUCLEOTIDE SEQUENCE [LARGE SCALE MRNA] OF 220-1305</scope>
    <source>
        <strain>C57BL/6J</strain>
        <tissue>Brain</tissue>
    </source>
</reference>
<reference key="3">
    <citation type="journal article" date="2006" name="Mol. Cell. Proteomics">
        <title>Comprehensive identification of phosphorylation sites in postsynaptic density preparations.</title>
        <authorList>
            <person name="Trinidad J.C."/>
            <person name="Specht C.G."/>
            <person name="Thalhammer A."/>
            <person name="Schoepfer R."/>
            <person name="Burlingame A.L."/>
        </authorList>
    </citation>
    <scope>PHOSPHORYLATION [LARGE SCALE ANALYSIS] AT SER-594</scope>
    <scope>IDENTIFICATION BY MASS SPECTROMETRY [LARGE SCALE ANALYSIS]</scope>
    <source>
        <tissue>Brain</tissue>
    </source>
</reference>
<reference key="4">
    <citation type="journal article" date="2008" name="J. Proteome Res.">
        <title>Large-scale identification and evolution indexing of tyrosine phosphorylation sites from murine brain.</title>
        <authorList>
            <person name="Ballif B.A."/>
            <person name="Carey G.R."/>
            <person name="Sunyaev S.R."/>
            <person name="Gygi S.P."/>
        </authorList>
    </citation>
    <scope>PHOSPHORYLATION [LARGE SCALE ANALYSIS] AT TYR-1188</scope>
    <scope>IDENTIFICATION BY MASS SPECTROMETRY [LARGE SCALE ANALYSIS]</scope>
    <source>
        <tissue>Brain</tissue>
    </source>
</reference>
<reference key="5">
    <citation type="journal article" date="2010" name="Cell">
        <title>A tissue-specific atlas of mouse protein phosphorylation and expression.</title>
        <authorList>
            <person name="Huttlin E.L."/>
            <person name="Jedrychowski M.P."/>
            <person name="Elias J.E."/>
            <person name="Goswami T."/>
            <person name="Rad R."/>
            <person name="Beausoleil S.A."/>
            <person name="Villen J."/>
            <person name="Haas W."/>
            <person name="Sowa M.E."/>
            <person name="Gygi S.P."/>
        </authorList>
    </citation>
    <scope>PHOSPHORYLATION [LARGE SCALE ANALYSIS] AT SER-32; SER-660 AND SER-749</scope>
    <scope>IDENTIFICATION BY MASS SPECTROMETRY [LARGE SCALE ANALYSIS]</scope>
    <source>
        <tissue>Brain</tissue>
        <tissue>Testis</tissue>
    </source>
</reference>
<reference key="6">
    <citation type="journal article" date="2014" name="Mol. Cell. Proteomics">
        <title>Immunoaffinity enrichment and mass spectrometry analysis of protein methylation.</title>
        <authorList>
            <person name="Guo A."/>
            <person name="Gu H."/>
            <person name="Zhou J."/>
            <person name="Mulhern D."/>
            <person name="Wang Y."/>
            <person name="Lee K.A."/>
            <person name="Yang V."/>
            <person name="Aguiar M."/>
            <person name="Kornhauser J."/>
            <person name="Jia X."/>
            <person name="Ren J."/>
            <person name="Beausoleil S.A."/>
            <person name="Silva J.C."/>
            <person name="Vemulapalli V."/>
            <person name="Bedford M.T."/>
            <person name="Comb M.J."/>
        </authorList>
    </citation>
    <scope>METHYLATION [LARGE SCALE ANALYSIS] AT ARG-1263</scope>
    <scope>IDENTIFICATION BY MASS SPECTROMETRY [LARGE SCALE ANALYSIS]</scope>
    <source>
        <tissue>Brain</tissue>
        <tissue>Embryo</tissue>
    </source>
</reference>
<protein>
    <recommendedName>
        <fullName>Rho GTPase-activating protein 33</fullName>
    </recommendedName>
    <alternativeName>
        <fullName>Rho-type GTPase-activating protein 33</fullName>
    </alternativeName>
    <alternativeName>
        <fullName>Sorting nexin-26</fullName>
    </alternativeName>
    <alternativeName>
        <fullName>Tc10/CDC42 GTPase-activating protein</fullName>
    </alternativeName>
</protein>
<dbReference type="EMBL" id="AY217764">
    <property type="protein sequence ID" value="AAO89073.1"/>
    <property type="molecule type" value="mRNA"/>
</dbReference>
<dbReference type="EMBL" id="BC065086">
    <property type="protein sequence ID" value="AAH65086.1"/>
    <property type="molecule type" value="mRNA"/>
</dbReference>
<dbReference type="EMBL" id="BC065166">
    <property type="protein sequence ID" value="AAH65166.1"/>
    <property type="molecule type" value="mRNA"/>
</dbReference>
<dbReference type="EMBL" id="BC066047">
    <property type="protein sequence ID" value="AAH66047.1"/>
    <property type="molecule type" value="mRNA"/>
</dbReference>
<dbReference type="EMBL" id="BC061471">
    <property type="protein sequence ID" value="AAH61471.1"/>
    <property type="status" value="ALT_INIT"/>
    <property type="molecule type" value="mRNA"/>
</dbReference>
<dbReference type="CCDS" id="CCDS21095.1"/>
<dbReference type="RefSeq" id="NP_001276599.1">
    <property type="nucleotide sequence ID" value="NM_001289670.1"/>
</dbReference>
<dbReference type="RefSeq" id="NP_001276611.1">
    <property type="nucleotide sequence ID" value="NM_001289682.1"/>
</dbReference>
<dbReference type="RefSeq" id="NP_839983.1">
    <property type="nucleotide sequence ID" value="NM_178252.3"/>
</dbReference>
<dbReference type="RefSeq" id="XP_006539951.1">
    <property type="nucleotide sequence ID" value="XM_006539888.3"/>
</dbReference>
<dbReference type="SMR" id="Q80YF9"/>
<dbReference type="BioGRID" id="231366">
    <property type="interactions" value="28"/>
</dbReference>
<dbReference type="FunCoup" id="Q80YF9">
    <property type="interactions" value="434"/>
</dbReference>
<dbReference type="IntAct" id="Q80YF9">
    <property type="interactions" value="12"/>
</dbReference>
<dbReference type="STRING" id="10090.ENSMUSP00000146602"/>
<dbReference type="GlyGen" id="Q80YF9">
    <property type="glycosylation" value="7 sites, 1 N-linked glycan (1 site)"/>
</dbReference>
<dbReference type="iPTMnet" id="Q80YF9"/>
<dbReference type="PhosphoSitePlus" id="Q80YF9"/>
<dbReference type="PaxDb" id="10090-ENSMUSP00000038412"/>
<dbReference type="ProteomicsDB" id="254967"/>
<dbReference type="Antibodypedia" id="29527">
    <property type="antibodies" value="129 antibodies from 25 providers"/>
</dbReference>
<dbReference type="DNASU" id="233071"/>
<dbReference type="Ensembl" id="ENSMUST00000044338.5">
    <property type="protein sequence ID" value="ENSMUSP00000038412.5"/>
    <property type="gene ID" value="ENSMUSG00000036882.8"/>
</dbReference>
<dbReference type="Ensembl" id="ENSMUST00000207860.2">
    <property type="protein sequence ID" value="ENSMUSP00000146602.2"/>
    <property type="gene ID" value="ENSMUSG00000036882.8"/>
</dbReference>
<dbReference type="Ensembl" id="ENSMUST00000208538.2">
    <property type="protein sequence ID" value="ENSMUSP00000146767.2"/>
    <property type="gene ID" value="ENSMUSG00000036882.8"/>
</dbReference>
<dbReference type="GeneID" id="233071"/>
<dbReference type="KEGG" id="mmu:233071"/>
<dbReference type="UCSC" id="uc009geq.2">
    <property type="organism name" value="mouse"/>
</dbReference>
<dbReference type="AGR" id="MGI:2673998"/>
<dbReference type="CTD" id="115703"/>
<dbReference type="MGI" id="MGI:2673998">
    <property type="gene designation" value="Arhgap33"/>
</dbReference>
<dbReference type="VEuPathDB" id="HostDB:ENSMUSG00000036882"/>
<dbReference type="eggNOG" id="KOG1449">
    <property type="taxonomic scope" value="Eukaryota"/>
</dbReference>
<dbReference type="GeneTree" id="ENSGT00940000155110"/>
<dbReference type="HOGENOM" id="CLU_009183_0_0_1"/>
<dbReference type="InParanoid" id="Q80YF9"/>
<dbReference type="OMA" id="FPIMTSH"/>
<dbReference type="OrthoDB" id="5873004at2759"/>
<dbReference type="PhylomeDB" id="Q80YF9"/>
<dbReference type="TreeFam" id="TF351451"/>
<dbReference type="Reactome" id="R-MMU-9013148">
    <property type="pathway name" value="CDC42 GTPase cycle"/>
</dbReference>
<dbReference type="Reactome" id="R-MMU-9013149">
    <property type="pathway name" value="RAC1 GTPase cycle"/>
</dbReference>
<dbReference type="Reactome" id="R-MMU-9013406">
    <property type="pathway name" value="RHOQ GTPase cycle"/>
</dbReference>
<dbReference type="BioGRID-ORCS" id="233071">
    <property type="hits" value="2 hits in 78 CRISPR screens"/>
</dbReference>
<dbReference type="CD-CODE" id="CE726F99">
    <property type="entry name" value="Postsynaptic density"/>
</dbReference>
<dbReference type="ChiTaRS" id="Arhgap33">
    <property type="organism name" value="mouse"/>
</dbReference>
<dbReference type="PRO" id="PR:Q80YF9"/>
<dbReference type="Proteomes" id="UP000000589">
    <property type="component" value="Chromosome 7"/>
</dbReference>
<dbReference type="RNAct" id="Q80YF9">
    <property type="molecule type" value="protein"/>
</dbReference>
<dbReference type="Bgee" id="ENSMUSG00000036882">
    <property type="expression patterns" value="Expressed in embryonic brain and 145 other cell types or tissues"/>
</dbReference>
<dbReference type="ExpressionAtlas" id="Q80YF9">
    <property type="expression patterns" value="baseline and differential"/>
</dbReference>
<dbReference type="GO" id="GO:0005737">
    <property type="term" value="C:cytoplasm"/>
    <property type="evidence" value="ECO:0000314"/>
    <property type="project" value="MGI"/>
</dbReference>
<dbReference type="GO" id="GO:0043197">
    <property type="term" value="C:dendritic spine"/>
    <property type="evidence" value="ECO:0007669"/>
    <property type="project" value="Ensembl"/>
</dbReference>
<dbReference type="GO" id="GO:0098978">
    <property type="term" value="C:glutamatergic synapse"/>
    <property type="evidence" value="ECO:0000314"/>
    <property type="project" value="SynGO"/>
</dbReference>
<dbReference type="GO" id="GO:0005886">
    <property type="term" value="C:plasma membrane"/>
    <property type="evidence" value="ECO:0000314"/>
    <property type="project" value="MGI"/>
</dbReference>
<dbReference type="GO" id="GO:0014069">
    <property type="term" value="C:postsynaptic density"/>
    <property type="evidence" value="ECO:0007669"/>
    <property type="project" value="Ensembl"/>
</dbReference>
<dbReference type="GO" id="GO:0032991">
    <property type="term" value="C:protein-containing complex"/>
    <property type="evidence" value="ECO:0007669"/>
    <property type="project" value="Ensembl"/>
</dbReference>
<dbReference type="GO" id="GO:0005096">
    <property type="term" value="F:GTPase activator activity"/>
    <property type="evidence" value="ECO:0000314"/>
    <property type="project" value="MGI"/>
</dbReference>
<dbReference type="GO" id="GO:0035091">
    <property type="term" value="F:phosphatidylinositol binding"/>
    <property type="evidence" value="ECO:0007669"/>
    <property type="project" value="InterPro"/>
</dbReference>
<dbReference type="GO" id="GO:0019901">
    <property type="term" value="F:protein kinase binding"/>
    <property type="evidence" value="ECO:0007669"/>
    <property type="project" value="Ensembl"/>
</dbReference>
<dbReference type="GO" id="GO:0015031">
    <property type="term" value="P:protein transport"/>
    <property type="evidence" value="ECO:0007669"/>
    <property type="project" value="UniProtKB-KW"/>
</dbReference>
<dbReference type="GO" id="GO:0061001">
    <property type="term" value="P:regulation of dendritic spine morphogenesis"/>
    <property type="evidence" value="ECO:0007669"/>
    <property type="project" value="Ensembl"/>
</dbReference>
<dbReference type="GO" id="GO:0150052">
    <property type="term" value="P:regulation of postsynapse assembly"/>
    <property type="evidence" value="ECO:0000314"/>
    <property type="project" value="SynGO"/>
</dbReference>
<dbReference type="GO" id="GO:0009636">
    <property type="term" value="P:response to toxic substance"/>
    <property type="evidence" value="ECO:0007669"/>
    <property type="project" value="Ensembl"/>
</dbReference>
<dbReference type="GO" id="GO:0007165">
    <property type="term" value="P:signal transduction"/>
    <property type="evidence" value="ECO:0007669"/>
    <property type="project" value="InterPro"/>
</dbReference>
<dbReference type="CDD" id="cd04384">
    <property type="entry name" value="RhoGAP_CdGAP"/>
    <property type="match status" value="1"/>
</dbReference>
<dbReference type="CDD" id="cd11835">
    <property type="entry name" value="SH3_ARHGAP32_33"/>
    <property type="match status" value="1"/>
</dbReference>
<dbReference type="FunFam" id="1.10.555.10:FF:000002">
    <property type="entry name" value="rho GTPase-activating protein 32 isoform X1"/>
    <property type="match status" value="1"/>
</dbReference>
<dbReference type="FunFam" id="2.30.30.40:FF:000030">
    <property type="entry name" value="rho GTPase-activating protein 32 isoform X2"/>
    <property type="match status" value="1"/>
</dbReference>
<dbReference type="FunFam" id="3.30.1520.10:FF:000095">
    <property type="entry name" value="Rho GTPase-activating protein 33"/>
    <property type="match status" value="1"/>
</dbReference>
<dbReference type="Gene3D" id="3.30.1520.10">
    <property type="entry name" value="Phox-like domain"/>
    <property type="match status" value="1"/>
</dbReference>
<dbReference type="Gene3D" id="1.10.555.10">
    <property type="entry name" value="Rho GTPase activation protein"/>
    <property type="match status" value="1"/>
</dbReference>
<dbReference type="Gene3D" id="2.30.30.40">
    <property type="entry name" value="SH3 Domains"/>
    <property type="match status" value="1"/>
</dbReference>
<dbReference type="InterPro" id="IPR051576">
    <property type="entry name" value="PX-Rho_GAP"/>
</dbReference>
<dbReference type="InterPro" id="IPR036871">
    <property type="entry name" value="PX_dom_sf"/>
</dbReference>
<dbReference type="InterPro" id="IPR008936">
    <property type="entry name" value="Rho_GTPase_activation_prot"/>
</dbReference>
<dbReference type="InterPro" id="IPR000198">
    <property type="entry name" value="RhoGAP_dom"/>
</dbReference>
<dbReference type="InterPro" id="IPR036028">
    <property type="entry name" value="SH3-like_dom_sf"/>
</dbReference>
<dbReference type="InterPro" id="IPR001452">
    <property type="entry name" value="SH3_domain"/>
</dbReference>
<dbReference type="PANTHER" id="PTHR15729">
    <property type="entry name" value="CDC42 GTPASE-ACTIVATING PROTEIN"/>
    <property type="match status" value="1"/>
</dbReference>
<dbReference type="PANTHER" id="PTHR15729:SF11">
    <property type="entry name" value="RHO GTPASE-ACTIVATING PROTEIN 33"/>
    <property type="match status" value="1"/>
</dbReference>
<dbReference type="Pfam" id="PF00620">
    <property type="entry name" value="RhoGAP"/>
    <property type="match status" value="1"/>
</dbReference>
<dbReference type="Pfam" id="PF07653">
    <property type="entry name" value="SH3_2"/>
    <property type="match status" value="1"/>
</dbReference>
<dbReference type="SMART" id="SM00324">
    <property type="entry name" value="RhoGAP"/>
    <property type="match status" value="1"/>
</dbReference>
<dbReference type="SMART" id="SM00326">
    <property type="entry name" value="SH3"/>
    <property type="match status" value="1"/>
</dbReference>
<dbReference type="SUPFAM" id="SSF48350">
    <property type="entry name" value="GTPase activation domain, GAP"/>
    <property type="match status" value="1"/>
</dbReference>
<dbReference type="SUPFAM" id="SSF64268">
    <property type="entry name" value="PX domain"/>
    <property type="match status" value="1"/>
</dbReference>
<dbReference type="SUPFAM" id="SSF50044">
    <property type="entry name" value="SH3-domain"/>
    <property type="match status" value="1"/>
</dbReference>
<dbReference type="PROSITE" id="PS50238">
    <property type="entry name" value="RHOGAP"/>
    <property type="match status" value="1"/>
</dbReference>
<dbReference type="PROSITE" id="PS50002">
    <property type="entry name" value="SH3"/>
    <property type="match status" value="1"/>
</dbReference>
<organism>
    <name type="scientific">Mus musculus</name>
    <name type="common">Mouse</name>
    <dbReference type="NCBI Taxonomy" id="10090"/>
    <lineage>
        <taxon>Eukaryota</taxon>
        <taxon>Metazoa</taxon>
        <taxon>Chordata</taxon>
        <taxon>Craniata</taxon>
        <taxon>Vertebrata</taxon>
        <taxon>Euteleostomi</taxon>
        <taxon>Mammalia</taxon>
        <taxon>Eutheria</taxon>
        <taxon>Euarchontoglires</taxon>
        <taxon>Glires</taxon>
        <taxon>Rodentia</taxon>
        <taxon>Myomorpha</taxon>
        <taxon>Muroidea</taxon>
        <taxon>Muridae</taxon>
        <taxon>Murinae</taxon>
        <taxon>Mus</taxon>
        <taxon>Mus</taxon>
    </lineage>
</organism>
<gene>
    <name type="primary">Arhgap33</name>
    <name type="synonym">Snx26</name>
    <name type="synonym">Tcgap</name>
</gene>
<proteinExistence type="evidence at protein level"/>
<keyword id="KW-1003">Cell membrane</keyword>
<keyword id="KW-0343">GTPase activation</keyword>
<keyword id="KW-0472">Membrane</keyword>
<keyword id="KW-0488">Methylation</keyword>
<keyword id="KW-0597">Phosphoprotein</keyword>
<keyword id="KW-0653">Protein transport</keyword>
<keyword id="KW-1185">Reference proteome</keyword>
<keyword id="KW-0728">SH3 domain</keyword>
<keyword id="KW-0813">Transport</keyword>